<accession>Q9Z8Z4</accession>
<accession>Q9JRT2</accession>
<sequence>MRKRHSFDSTSTKKEAVSKAIQKIIKIMETTDPSLNVETPNAEIESILQEIKEIKQKLSKQAEDLGLLEKYCSQETLSNLENTNASLKLSIGSVIEELASLKQLVEESIEESLGQQDQLIQSVLIEISDKFLSSIGETLSGNLDMNQNVIQGLLIKENPEKSEAASVGYVQTLLEPLSKRIGETHKKVATHDVNISSLQFHMMSVAGGRFRGHIDMNGYRVLGLGEPKNGEDAVSKDYLERYVSSQLTIDKVEDKPITKPNKGKLLYSQGTSPKLEGPLPLGLLTSGISGFTWKSASKSNDGSFPFSALRHKETESDTDCFQITSTTLSGNQAGTYTWSLSLKVLVPSIFQIEKPEVQLSLVYSYEDWLPIDNIFNMSQPRTIPLALLGQTMLAGQKYDILELAAHQTNQTLMISPNCSRFSLQLKQTNQFENSPVDFYIVHAAHSCHWSGF</sequence>
<proteinExistence type="predicted"/>
<reference key="1">
    <citation type="journal article" date="1999" name="Nat. Genet.">
        <title>Comparative genomes of Chlamydia pneumoniae and C. trachomatis.</title>
        <authorList>
            <person name="Kalman S."/>
            <person name="Mitchell W.P."/>
            <person name="Marathe R."/>
            <person name="Lammel C.J."/>
            <person name="Fan J."/>
            <person name="Hyman R.W."/>
            <person name="Olinger L."/>
            <person name="Grimwood J."/>
            <person name="Davis R.W."/>
            <person name="Stephens R.S."/>
        </authorList>
    </citation>
    <scope>NUCLEOTIDE SEQUENCE [LARGE SCALE GENOMIC DNA]</scope>
    <source>
        <strain>CWL029</strain>
    </source>
</reference>
<reference key="2">
    <citation type="journal article" date="2000" name="Nucleic Acids Res.">
        <title>Genome sequences of Chlamydia trachomatis MoPn and Chlamydia pneumoniae AR39.</title>
        <authorList>
            <person name="Read T.D."/>
            <person name="Brunham R.C."/>
            <person name="Shen C."/>
            <person name="Gill S.R."/>
            <person name="Heidelberg J.F."/>
            <person name="White O."/>
            <person name="Hickey E.K."/>
            <person name="Peterson J.D."/>
            <person name="Utterback T.R."/>
            <person name="Berry K.J."/>
            <person name="Bass S."/>
            <person name="Linher K.D."/>
            <person name="Weidman J.F."/>
            <person name="Khouri H.M."/>
            <person name="Craven B."/>
            <person name="Bowman C."/>
            <person name="Dodson R.J."/>
            <person name="Gwinn M.L."/>
            <person name="Nelson W.C."/>
            <person name="DeBoy R.T."/>
            <person name="Kolonay J.F."/>
            <person name="McClarty G."/>
            <person name="Salzberg S.L."/>
            <person name="Eisen J.A."/>
            <person name="Fraser C.M."/>
        </authorList>
    </citation>
    <scope>NUCLEOTIDE SEQUENCE [LARGE SCALE GENOMIC DNA]</scope>
    <source>
        <strain>AR39</strain>
    </source>
</reference>
<reference key="3">
    <citation type="journal article" date="2000" name="Nucleic Acids Res.">
        <title>Comparison of whole genome sequences of Chlamydia pneumoniae J138 from Japan and CWL029 from USA.</title>
        <authorList>
            <person name="Shirai M."/>
            <person name="Hirakawa H."/>
            <person name="Kimoto M."/>
            <person name="Tabuchi M."/>
            <person name="Kishi F."/>
            <person name="Ouchi K."/>
            <person name="Shiba T."/>
            <person name="Ishii K."/>
            <person name="Hattori M."/>
            <person name="Kuhara S."/>
            <person name="Nakazawa T."/>
        </authorList>
    </citation>
    <scope>NUCLEOTIDE SEQUENCE [LARGE SCALE GENOMIC DNA]</scope>
    <source>
        <strain>J138</strain>
    </source>
</reference>
<reference key="4">
    <citation type="submission" date="2002-05" db="EMBL/GenBank/DDBJ databases">
        <title>The genome sequence of Chlamydia pneumoniae TW183 and comparison with other Chlamydia strains based on whole genome sequence analysis.</title>
        <authorList>
            <person name="Geng M.M."/>
            <person name="Schuhmacher A."/>
            <person name="Muehldorfer I."/>
            <person name="Bensch K.W."/>
            <person name="Schaefer K.P."/>
            <person name="Schneider S."/>
            <person name="Pohl T."/>
            <person name="Essig A."/>
            <person name="Marre R."/>
            <person name="Melchers K."/>
        </authorList>
    </citation>
    <scope>NUCLEOTIDE SEQUENCE [LARGE SCALE GENOMIC DNA]</scope>
    <source>
        <strain>TW-183</strain>
    </source>
</reference>
<dbReference type="EMBL" id="AE001363">
    <property type="protein sequence ID" value="AAD18343.1"/>
    <property type="molecule type" value="Genomic_DNA"/>
</dbReference>
<dbReference type="EMBL" id="AE002161">
    <property type="protein sequence ID" value="AAF38395.1"/>
    <property type="molecule type" value="Genomic_DNA"/>
</dbReference>
<dbReference type="EMBL" id="BA000008">
    <property type="protein sequence ID" value="BAA98400.1"/>
    <property type="molecule type" value="Genomic_DNA"/>
</dbReference>
<dbReference type="EMBL" id="AE009440">
    <property type="protein sequence ID" value="AAP98126.1"/>
    <property type="molecule type" value="Genomic_DNA"/>
</dbReference>
<dbReference type="PIR" id="E72108">
    <property type="entry name" value="E72108"/>
</dbReference>
<dbReference type="PIR" id="E81562">
    <property type="entry name" value="E81562"/>
</dbReference>
<dbReference type="PIR" id="F86514">
    <property type="entry name" value="F86514"/>
</dbReference>
<dbReference type="RefSeq" id="NP_224399.1">
    <property type="nucleotide sequence ID" value="NC_000922.1"/>
</dbReference>
<dbReference type="RefSeq" id="WP_010882841.1">
    <property type="nucleotide sequence ID" value="NZ_LN847257.1"/>
</dbReference>
<dbReference type="RefSeq" id="WP_010892103.1">
    <property type="nucleotide sequence ID" value="NZ_LN846995.1"/>
</dbReference>
<dbReference type="SMR" id="Q9Z8Z4"/>
<dbReference type="STRING" id="406984.CPK_ORF00696"/>
<dbReference type="GeneID" id="45050236"/>
<dbReference type="KEGG" id="cpa:CP_0577"/>
<dbReference type="KEGG" id="cpj:CPj0190"/>
<dbReference type="KEGG" id="cpn:CPn_0190"/>
<dbReference type="KEGG" id="cpt:CpB0193"/>
<dbReference type="PATRIC" id="fig|115713.3.peg.215"/>
<dbReference type="HOGENOM" id="CLU_645110_0_0_0"/>
<dbReference type="OrthoDB" id="17141at2"/>
<dbReference type="Proteomes" id="UP000000583">
    <property type="component" value="Chromosome"/>
</dbReference>
<dbReference type="Proteomes" id="UP000000801">
    <property type="component" value="Chromosome"/>
</dbReference>
<organism>
    <name type="scientific">Chlamydia pneumoniae</name>
    <name type="common">Chlamydophila pneumoniae</name>
    <dbReference type="NCBI Taxonomy" id="83558"/>
    <lineage>
        <taxon>Bacteria</taxon>
        <taxon>Pseudomonadati</taxon>
        <taxon>Chlamydiota</taxon>
        <taxon>Chlamydiia</taxon>
        <taxon>Chlamydiales</taxon>
        <taxon>Chlamydiaceae</taxon>
        <taxon>Chlamydia/Chlamydophila group</taxon>
        <taxon>Chlamydia</taxon>
    </lineage>
</organism>
<gene>
    <name type="ordered locus">CPn_0190</name>
    <name type="ordered locus">CP_0577</name>
    <name type="ordered locus">CPj0190</name>
    <name type="ordered locus">CpB0193</name>
</gene>
<protein>
    <recommendedName>
        <fullName>Uncharacterized protein CPn_0190/CP_0577/CPj0190/CpB0193</fullName>
    </recommendedName>
</protein>
<feature type="chain" id="PRO_0000218368" description="Uncharacterized protein CPn_0190/CP_0577/CPj0190/CpB0193">
    <location>
        <begin position="1"/>
        <end position="452"/>
    </location>
</feature>
<feature type="sequence variant" description="In strain: CWL029 and TW-183.">
    <original>G</original>
    <variation>S</variation>
    <location>
        <position position="277"/>
    </location>
</feature>
<name>Y190_CHLPN</name>